<dbReference type="EC" id="3.1.-.-" evidence="1"/>
<dbReference type="EMBL" id="CP000057">
    <property type="protein sequence ID" value="AAX87007.1"/>
    <property type="molecule type" value="Genomic_DNA"/>
</dbReference>
<dbReference type="RefSeq" id="WP_011271775.1">
    <property type="nucleotide sequence ID" value="NC_007146.2"/>
</dbReference>
<dbReference type="BMRB" id="Q4QPP0"/>
<dbReference type="SMR" id="Q4QPP0"/>
<dbReference type="GeneID" id="93220760"/>
<dbReference type="KEGG" id="hit:NTHI0004"/>
<dbReference type="HOGENOM" id="CLU_106710_0_1_6"/>
<dbReference type="Proteomes" id="UP000002525">
    <property type="component" value="Chromosome"/>
</dbReference>
<dbReference type="GO" id="GO:0005737">
    <property type="term" value="C:cytoplasm"/>
    <property type="evidence" value="ECO:0007669"/>
    <property type="project" value="UniProtKB-SubCell"/>
</dbReference>
<dbReference type="GO" id="GO:0004222">
    <property type="term" value="F:metalloendopeptidase activity"/>
    <property type="evidence" value="ECO:0007669"/>
    <property type="project" value="InterPro"/>
</dbReference>
<dbReference type="GO" id="GO:0004521">
    <property type="term" value="F:RNA endonuclease activity"/>
    <property type="evidence" value="ECO:0007669"/>
    <property type="project" value="UniProtKB-UniRule"/>
</dbReference>
<dbReference type="GO" id="GO:0008270">
    <property type="term" value="F:zinc ion binding"/>
    <property type="evidence" value="ECO:0007669"/>
    <property type="project" value="UniProtKB-UniRule"/>
</dbReference>
<dbReference type="GO" id="GO:0006364">
    <property type="term" value="P:rRNA processing"/>
    <property type="evidence" value="ECO:0007669"/>
    <property type="project" value="UniProtKB-UniRule"/>
</dbReference>
<dbReference type="Gene3D" id="3.40.390.30">
    <property type="entry name" value="Metalloproteases ('zincins'), catalytic domain"/>
    <property type="match status" value="1"/>
</dbReference>
<dbReference type="HAMAP" id="MF_00009">
    <property type="entry name" value="Endoribonucl_YbeY"/>
    <property type="match status" value="1"/>
</dbReference>
<dbReference type="InterPro" id="IPR023091">
    <property type="entry name" value="MetalPrtase_cat_dom_sf_prd"/>
</dbReference>
<dbReference type="InterPro" id="IPR002036">
    <property type="entry name" value="YbeY"/>
</dbReference>
<dbReference type="InterPro" id="IPR020549">
    <property type="entry name" value="YbeY_CS"/>
</dbReference>
<dbReference type="NCBIfam" id="TIGR00043">
    <property type="entry name" value="rRNA maturation RNase YbeY"/>
    <property type="match status" value="1"/>
</dbReference>
<dbReference type="PANTHER" id="PTHR46986">
    <property type="entry name" value="ENDORIBONUCLEASE YBEY, CHLOROPLASTIC"/>
    <property type="match status" value="1"/>
</dbReference>
<dbReference type="PANTHER" id="PTHR46986:SF1">
    <property type="entry name" value="ENDORIBONUCLEASE YBEY, CHLOROPLASTIC"/>
    <property type="match status" value="1"/>
</dbReference>
<dbReference type="Pfam" id="PF02130">
    <property type="entry name" value="YbeY"/>
    <property type="match status" value="1"/>
</dbReference>
<dbReference type="SUPFAM" id="SSF55486">
    <property type="entry name" value="Metalloproteases ('zincins'), catalytic domain"/>
    <property type="match status" value="1"/>
</dbReference>
<dbReference type="PROSITE" id="PS01306">
    <property type="entry name" value="UPF0054"/>
    <property type="match status" value="1"/>
</dbReference>
<protein>
    <recommendedName>
        <fullName evidence="1">Endoribonuclease YbeY</fullName>
        <ecNumber evidence="1">3.1.-.-</ecNumber>
    </recommendedName>
</protein>
<evidence type="ECO:0000255" key="1">
    <source>
        <dbReference type="HAMAP-Rule" id="MF_00009"/>
    </source>
</evidence>
<organism>
    <name type="scientific">Haemophilus influenzae (strain 86-028NP)</name>
    <dbReference type="NCBI Taxonomy" id="281310"/>
    <lineage>
        <taxon>Bacteria</taxon>
        <taxon>Pseudomonadati</taxon>
        <taxon>Pseudomonadota</taxon>
        <taxon>Gammaproteobacteria</taxon>
        <taxon>Pasteurellales</taxon>
        <taxon>Pasteurellaceae</taxon>
        <taxon>Haemophilus</taxon>
    </lineage>
</organism>
<proteinExistence type="inferred from homology"/>
<feature type="chain" id="PRO_0000102464" description="Endoribonuclease YbeY">
    <location>
        <begin position="1"/>
        <end position="154"/>
    </location>
</feature>
<feature type="binding site" evidence="1">
    <location>
        <position position="114"/>
    </location>
    <ligand>
        <name>Zn(2+)</name>
        <dbReference type="ChEBI" id="CHEBI:29105"/>
        <note>catalytic</note>
    </ligand>
</feature>
<feature type="binding site" evidence="1">
    <location>
        <position position="118"/>
    </location>
    <ligand>
        <name>Zn(2+)</name>
        <dbReference type="ChEBI" id="CHEBI:29105"/>
        <note>catalytic</note>
    </ligand>
</feature>
<feature type="binding site" evidence="1">
    <location>
        <position position="124"/>
    </location>
    <ligand>
        <name>Zn(2+)</name>
        <dbReference type="ChEBI" id="CHEBI:29105"/>
        <note>catalytic</note>
    </ligand>
</feature>
<reference key="1">
    <citation type="journal article" date="2005" name="J. Bacteriol.">
        <title>Genomic sequence of an otitis media isolate of nontypeable Haemophilus influenzae: comparative study with H. influenzae serotype d, strain KW20.</title>
        <authorList>
            <person name="Harrison A."/>
            <person name="Dyer D.W."/>
            <person name="Gillaspy A."/>
            <person name="Ray W.C."/>
            <person name="Mungur R."/>
            <person name="Carson M.B."/>
            <person name="Zhong H."/>
            <person name="Gipson J."/>
            <person name="Gipson M."/>
            <person name="Johnson L.S."/>
            <person name="Lewis L."/>
            <person name="Bakaletz L.O."/>
            <person name="Munson R.S. Jr."/>
        </authorList>
    </citation>
    <scope>NUCLEOTIDE SEQUENCE [LARGE SCALE GENOMIC DNA]</scope>
    <source>
        <strain>86-028NP</strain>
    </source>
</reference>
<gene>
    <name evidence="1" type="primary">ybeY</name>
    <name type="ordered locus">NTHI0004</name>
</gene>
<comment type="function">
    <text evidence="1">Single strand-specific metallo-endoribonuclease involved in late-stage 70S ribosome quality control and in maturation of the 3' terminus of the 16S rRNA.</text>
</comment>
<comment type="cofactor">
    <cofactor evidence="1">
        <name>Zn(2+)</name>
        <dbReference type="ChEBI" id="CHEBI:29105"/>
    </cofactor>
    <text evidence="1">Binds 1 zinc ion.</text>
</comment>
<comment type="subcellular location">
    <subcellularLocation>
        <location evidence="1">Cytoplasm</location>
    </subcellularLocation>
</comment>
<comment type="similarity">
    <text evidence="1">Belongs to the endoribonuclease YbeY family.</text>
</comment>
<sequence>MGSVLVDLQIATENIEGLPTEEQIVQWATGAVQPEGNEVEMTVRIVDEAESHELNLTYRGKDRPTNVLSFPFECPDEVELPLLGDLVICRQVVEREAAEQEKPLMAHWAHMVVHGCLHLLGYDHIEDDEAEEMESLETQIMQGLGFDDPYLAEK</sequence>
<name>YBEY_HAEI8</name>
<accession>Q4QPP0</accession>
<keyword id="KW-0963">Cytoplasm</keyword>
<keyword id="KW-0255">Endonuclease</keyword>
<keyword id="KW-0378">Hydrolase</keyword>
<keyword id="KW-0479">Metal-binding</keyword>
<keyword id="KW-0540">Nuclease</keyword>
<keyword id="KW-0690">Ribosome biogenesis</keyword>
<keyword id="KW-0698">rRNA processing</keyword>
<keyword id="KW-0862">Zinc</keyword>